<organism evidence="14">
    <name type="scientific">Stenotrophomonas maltophilia</name>
    <name type="common">Pseudomonas maltophilia</name>
    <name type="synonym">Xanthomonas maltophilia</name>
    <dbReference type="NCBI Taxonomy" id="40324"/>
    <lineage>
        <taxon>Bacteria</taxon>
        <taxon>Pseudomonadati</taxon>
        <taxon>Pseudomonadota</taxon>
        <taxon>Gammaproteobacteria</taxon>
        <taxon>Lysobacterales</taxon>
        <taxon>Lysobacteraceae</taxon>
        <taxon>Stenotrophomonas</taxon>
        <taxon>Stenotrophomonas maltophilia group</taxon>
    </lineage>
</organism>
<protein>
    <recommendedName>
        <fullName evidence="9">Dicamba O-demethylase, oxygenase component</fullName>
        <ecNumber evidence="2 3 4 13">1.14.15.-</ecNumber>
    </recommendedName>
    <alternativeName>
        <fullName evidence="7">Dicamba monooxygenase</fullName>
        <shortName evidence="10">DMO</shortName>
    </alternativeName>
    <alternativeName>
        <fullName evidence="11">Three-component Rieske non-heme iron oxygenase system</fullName>
    </alternativeName>
</protein>
<keyword id="KW-0001">2Fe-2S</keyword>
<keyword id="KW-0002">3D-structure</keyword>
<keyword id="KW-0058">Aromatic hydrocarbons catabolism</keyword>
<keyword id="KW-0903">Direct protein sequencing</keyword>
<keyword id="KW-0408">Iron</keyword>
<keyword id="KW-0411">Iron-sulfur</keyword>
<keyword id="KW-0479">Metal-binding</keyword>
<keyword id="KW-0503">Monooxygenase</keyword>
<keyword id="KW-0560">Oxidoreductase</keyword>
<feature type="initiator methionine" description="Removed" evidence="2">
    <location>
        <position position="1"/>
    </location>
</feature>
<feature type="chain" id="PRO_0000445255" description="Dicamba O-demethylase, oxygenase component">
    <location>
        <begin position="2"/>
        <end position="339"/>
    </location>
</feature>
<feature type="domain" description="Rieske" evidence="1">
    <location>
        <begin position="8"/>
        <end position="110"/>
    </location>
</feature>
<feature type="binding site" evidence="5 6 15 16 17 18 19 20 21">
    <location>
        <position position="48"/>
    </location>
    <ligand>
        <name>[2Fe-2S] cluster</name>
        <dbReference type="ChEBI" id="CHEBI:190135"/>
    </ligand>
</feature>
<feature type="binding site" evidence="5 6 15 16 17 18 19 20 21">
    <location>
        <position position="50"/>
    </location>
    <ligand>
        <name>[2Fe-2S] cluster</name>
        <dbReference type="ChEBI" id="CHEBI:190135"/>
    </ligand>
</feature>
<feature type="binding site" evidence="5 6 15 16 17 18 19 20 21">
    <location>
        <position position="67"/>
    </location>
    <ligand>
        <name>[2Fe-2S] cluster</name>
        <dbReference type="ChEBI" id="CHEBI:190135"/>
    </ligand>
</feature>
<feature type="binding site" evidence="5 6 15 16 17 18 19 20 21">
    <location>
        <position position="70"/>
    </location>
    <ligand>
        <name>[2Fe-2S] cluster</name>
        <dbReference type="ChEBI" id="CHEBI:190135"/>
    </ligand>
</feature>
<feature type="binding site" evidence="5 6 15 16 17 18 19 20 21">
    <location>
        <position position="159"/>
    </location>
    <ligand>
        <name>Fe cation</name>
        <dbReference type="ChEBI" id="CHEBI:24875"/>
    </ligand>
</feature>
<feature type="binding site" evidence="5 6 15 16 17 18 19 20 21">
    <location>
        <position position="164"/>
    </location>
    <ligand>
        <name>Fe cation</name>
        <dbReference type="ChEBI" id="CHEBI:24875"/>
    </ligand>
</feature>
<feature type="binding site" evidence="5 6 15 16 17 18 19 21">
    <location>
        <position position="229"/>
    </location>
    <ligand>
        <name>3,6-dichloro-2-methoxybenzoate</name>
        <dbReference type="ChEBI" id="CHEBI:141349"/>
    </ligand>
</feature>
<feature type="binding site" evidence="5 6 15 16 17 18 19 21">
    <location>
        <position position="250"/>
    </location>
    <ligand>
        <name>3,6-dichloro-2-methoxybenzoate</name>
        <dbReference type="ChEBI" id="CHEBI:141349"/>
    </ligand>
</feature>
<feature type="binding site" evidence="5 6 15 16 17 18 21">
    <location>
        <position position="284"/>
    </location>
    <ligand>
        <name>3,6-dichloro-2-methoxybenzoate</name>
        <dbReference type="ChEBI" id="CHEBI:141349"/>
    </ligand>
</feature>
<feature type="binding site" evidence="5 6 15 16 17 18 19 20 21">
    <location>
        <position position="293"/>
    </location>
    <ligand>
        <name>Fe cation</name>
        <dbReference type="ChEBI" id="CHEBI:24875"/>
    </ligand>
</feature>
<feature type="site" description="Plays a role in the stabilization of the metal coordination" evidence="5">
    <location>
        <position position="153"/>
    </location>
</feature>
<feature type="mutagenesis site" description="Strong reduction of O-demethylase activity." evidence="5">
    <original>N</original>
    <variation>A</variation>
    <location>
        <position position="153"/>
    </location>
</feature>
<feature type="mutagenesis site" description="Strong reduction of O-demethylase activity." evidence="5">
    <original>D</original>
    <variation>N</variation>
    <location>
        <position position="156"/>
    </location>
</feature>
<feature type="mutagenesis site" description="Loss of O-demethylase activity." evidence="5">
    <original>H</original>
    <variation>N</variation>
    <location>
        <position position="159"/>
    </location>
</feature>
<feature type="mutagenesis site" description="Loss of O-demethylase activity." evidence="5">
    <original>H</original>
    <variation>N</variation>
    <location>
        <position position="164"/>
    </location>
</feature>
<feature type="mutagenesis site" description="Loss of O-demethylase activity." evidence="5">
    <original>D</original>
    <variation>N</variation>
    <location>
        <position position="293"/>
    </location>
</feature>
<feature type="strand" evidence="22">
    <location>
        <begin position="9"/>
        <end position="12"/>
    </location>
</feature>
<feature type="helix" evidence="22">
    <location>
        <begin position="14"/>
        <end position="16"/>
    </location>
</feature>
<feature type="strand" evidence="23">
    <location>
        <begin position="18"/>
        <end position="20"/>
    </location>
</feature>
<feature type="strand" evidence="22">
    <location>
        <begin position="22"/>
        <end position="26"/>
    </location>
</feature>
<feature type="strand" evidence="22">
    <location>
        <begin position="29"/>
        <end position="35"/>
    </location>
</feature>
<feature type="strand" evidence="22">
    <location>
        <begin position="41"/>
        <end position="47"/>
    </location>
</feature>
<feature type="turn" evidence="22">
    <location>
        <begin position="49"/>
        <end position="51"/>
    </location>
</feature>
<feature type="helix" evidence="22">
    <location>
        <begin position="55"/>
        <end position="57"/>
    </location>
</feature>
<feature type="strand" evidence="22">
    <location>
        <begin position="59"/>
        <end position="61"/>
    </location>
</feature>
<feature type="strand" evidence="22">
    <location>
        <begin position="64"/>
        <end position="66"/>
    </location>
</feature>
<feature type="turn" evidence="22">
    <location>
        <begin position="68"/>
        <end position="70"/>
    </location>
</feature>
<feature type="strand" evidence="22">
    <location>
        <begin position="80"/>
        <end position="82"/>
    </location>
</feature>
<feature type="helix" evidence="22">
    <location>
        <begin position="92"/>
        <end position="94"/>
    </location>
</feature>
<feature type="strand" evidence="22">
    <location>
        <begin position="101"/>
        <end position="104"/>
    </location>
</feature>
<feature type="strand" evidence="22">
    <location>
        <begin position="107"/>
        <end position="110"/>
    </location>
</feature>
<feature type="helix" evidence="22">
    <location>
        <begin position="115"/>
        <end position="117"/>
    </location>
</feature>
<feature type="helix" evidence="22">
    <location>
        <begin position="120"/>
        <end position="122"/>
    </location>
</feature>
<feature type="helix" evidence="22">
    <location>
        <begin position="127"/>
        <end position="130"/>
    </location>
</feature>
<feature type="strand" evidence="22">
    <location>
        <begin position="134"/>
        <end position="145"/>
    </location>
</feature>
<feature type="helix" evidence="22">
    <location>
        <begin position="147"/>
        <end position="155"/>
    </location>
</feature>
<feature type="helix" evidence="22">
    <location>
        <begin position="157"/>
        <end position="159"/>
    </location>
</feature>
<feature type="helix" evidence="22">
    <location>
        <begin position="160"/>
        <end position="163"/>
    </location>
</feature>
<feature type="helix" evidence="22">
    <location>
        <begin position="165"/>
        <end position="168"/>
    </location>
</feature>
<feature type="helix" evidence="22">
    <location>
        <begin position="173"/>
        <end position="175"/>
    </location>
</feature>
<feature type="strand" evidence="22">
    <location>
        <begin position="177"/>
        <end position="182"/>
    </location>
</feature>
<feature type="strand" evidence="22">
    <location>
        <begin position="184"/>
        <end position="196"/>
    </location>
</feature>
<feature type="helix" evidence="22">
    <location>
        <begin position="200"/>
        <end position="205"/>
    </location>
</feature>
<feature type="turn" evidence="22">
    <location>
        <begin position="206"/>
        <end position="208"/>
    </location>
</feature>
<feature type="strand" evidence="22">
    <location>
        <begin position="213"/>
        <end position="222"/>
    </location>
</feature>
<feature type="turn" evidence="22">
    <location>
        <begin position="223"/>
        <end position="225"/>
    </location>
</feature>
<feature type="strand" evidence="22">
    <location>
        <begin position="226"/>
        <end position="235"/>
    </location>
</feature>
<feature type="helix" evidence="22">
    <location>
        <begin position="240"/>
        <end position="242"/>
    </location>
</feature>
<feature type="strand" evidence="22">
    <location>
        <begin position="243"/>
        <end position="256"/>
    </location>
</feature>
<feature type="strand" evidence="22">
    <location>
        <begin position="259"/>
        <end position="271"/>
    </location>
</feature>
<feature type="helix" evidence="22">
    <location>
        <begin position="275"/>
        <end position="288"/>
    </location>
</feature>
<feature type="turn" evidence="22">
    <location>
        <begin position="289"/>
        <end position="291"/>
    </location>
</feature>
<feature type="helix" evidence="22">
    <location>
        <begin position="292"/>
        <end position="302"/>
    </location>
</feature>
<feature type="helix" evidence="22">
    <location>
        <begin position="304"/>
        <end position="309"/>
    </location>
</feature>
<feature type="helix" evidence="22">
    <location>
        <begin position="318"/>
        <end position="320"/>
    </location>
</feature>
<feature type="helix" evidence="22">
    <location>
        <begin position="321"/>
        <end position="338"/>
    </location>
</feature>
<proteinExistence type="evidence at protein level"/>
<reference key="1">
    <citation type="journal article" date="2005" name="J. Biol. Chem.">
        <title>A three-component dicamba O-demethylase from Pseudomonas maltophilia, strain DI-6: gene isolation, characterization, and heterologous expression.</title>
        <authorList>
            <person name="Herman P.L."/>
            <person name="Behrens M."/>
            <person name="Chakraborty S."/>
            <person name="Chrastil B.M."/>
            <person name="Barycki J."/>
            <person name="Weeks D.P."/>
        </authorList>
    </citation>
    <scope>NUCLEOTIDE SEQUENCE [GENOMIC DNA]</scope>
    <scope>FUNCTION</scope>
    <scope>CATALYTIC ACTIVITY</scope>
    <scope>SUBUNIT</scope>
    <source>
        <strain evidence="14">DI-6</strain>
    </source>
</reference>
<reference key="2">
    <citation type="journal article" date="2005" name="Arch. Biochem. Biophys.">
        <title>A three-component dicamba O-demethylase from Pseudomonas maltophilia, strain DI-6: purification and characterization.</title>
        <authorList>
            <person name="Chakraborty S."/>
            <person name="Behrens M."/>
            <person name="Herman P.L."/>
            <person name="Arendsen A.F."/>
            <person name="Hagen W.R."/>
            <person name="Carlson D.L."/>
            <person name="Wang X.Z."/>
            <person name="Weeks D.P."/>
        </authorList>
    </citation>
    <scope>PROTEIN SEQUENCE OF 2-28</scope>
    <scope>FUNCTION</scope>
    <scope>CATALYTIC ACTIVITY</scope>
    <scope>BIOPHYSICOCHEMICAL PROPERTIES</scope>
    <scope>ACTIVITY REGULATION</scope>
    <scope>COFACTOR</scope>
    <scope>SUBUNIT</scope>
    <source>
        <strain>DI-6</strain>
    </source>
</reference>
<reference key="3">
    <citation type="journal article" date="1997" name="Appl. Environ. Microbiol.">
        <title>A three-component enzyme system catalyzes the O-demethylation of the herbicide dicamba in Pseudomonas maltophilia DI-6.</title>
        <authorList>
            <person name="Wang X."/>
            <person name="Li B."/>
            <person name="Herman P.L."/>
            <person name="Weeks D.P."/>
        </authorList>
    </citation>
    <scope>FUNCTION</scope>
    <scope>CATALYTIC ACTIVITY</scope>
    <scope>ACTIVITY REGULATION</scope>
    <scope>COFACTOR</scope>
    <scope>SUBUNIT</scope>
    <source>
        <strain>DI-6</strain>
    </source>
</reference>
<reference key="4">
    <citation type="journal article" date="2009" name="J. Mol. Biol.">
        <title>Dicamba monooxygenase: structural insights into a dynamic Rieske oxygenase that catalyzes an exocyclic monooxygenation.</title>
        <authorList>
            <person name="D'Ordine R.L."/>
            <person name="Rydel T.J."/>
            <person name="Storek M.J."/>
            <person name="Sturman E.J."/>
            <person name="Moshiri F."/>
            <person name="Bartlett R.K."/>
            <person name="Brown G.R."/>
            <person name="Eilers R.J."/>
            <person name="Dart C."/>
            <person name="Qi Y."/>
            <person name="Flasinski S."/>
            <person name="Franklin S.J."/>
        </authorList>
    </citation>
    <scope>X-RAY CRYSTALLOGRAPHY (1.95 ANGSTROMS) IN COMPLEX WITH IRON ION; IRON-SULFUR (2FE-2S) AND SUBSTRATE</scope>
    <scope>FUNCTION</scope>
    <scope>CATALYTIC ACTIVITY</scope>
    <scope>MUTAGENESIS OF ASN-153; ASP-156; HIS-159; HIS-164 AND ASP-293</scope>
    <scope>ACTIVITY REGULATION</scope>
    <scope>COFACTOR</scope>
    <scope>SUBUNIT</scope>
</reference>
<reference key="5">
    <citation type="journal article" date="2009" name="J. Mol. Biol.">
        <title>Crystal structure of dicamba monooxygenase: a Rieske nonheme oxygenase that catalyzes oxidative demethylation.</title>
        <authorList>
            <person name="Dumitru R."/>
            <person name="Jiang W.Z."/>
            <person name="Weeks D.P."/>
            <person name="Wilson M.A."/>
        </authorList>
    </citation>
    <scope>X-RAY CRYSTALLOGRAPHY (1.75 ANGSTROMS) OF 2-339 IN COMPLEX WITH IRON ION; IRON-SULFUR (2FE-2S) AND SUBSTRATE</scope>
    <scope>COFACTOR</scope>
    <scope>SUBUNIT</scope>
</reference>
<name>DDMC_STEMA</name>
<sequence>MTFVRNAWYVAALPEELSEKPLGRTILDTPLALYRQPDGVVAALLDICPHRFAPLSDGILVNGHLQCPYHGLEFDGGGQCVHNPHGNGARPASLNVRSFPVVERDALIWIWPGDPALADPGAIPDFGCRVDPAYRTVGGYGHVDCNYKLLVDNLMDLGHAQYVHRANAQTDAFDRLEREVIVGDGEIQALMKIPGGTPSVLMAKFLRGANTPVDAWNDIRWNKVSAMLNFIAVAPEGTPKEQSIHSRGTHILTPETEASCHYFFGSSRNFGIDDPEMDGVLRSWQAQALVKEDKVVVEAIERRRAYVEANGIRPAMLSCDEAAVRVSREIEKLEQLEAA</sequence>
<gene>
    <name evidence="8" type="primary">ddmC</name>
</gene>
<evidence type="ECO:0000255" key="1">
    <source>
        <dbReference type="PROSITE-ProRule" id="PRU00628"/>
    </source>
</evidence>
<evidence type="ECO:0000269" key="2">
    <source>
    </source>
</evidence>
<evidence type="ECO:0000269" key="3">
    <source>
    </source>
</evidence>
<evidence type="ECO:0000269" key="4">
    <source>
    </source>
</evidence>
<evidence type="ECO:0000269" key="5">
    <source>
    </source>
</evidence>
<evidence type="ECO:0000269" key="6">
    <source>
    </source>
</evidence>
<evidence type="ECO:0000303" key="7">
    <source>
    </source>
</evidence>
<evidence type="ECO:0000303" key="8">
    <source>
    </source>
</evidence>
<evidence type="ECO:0000303" key="9">
    <source>
    </source>
</evidence>
<evidence type="ECO:0000303" key="10">
    <source>
    </source>
</evidence>
<evidence type="ECO:0000305" key="11"/>
<evidence type="ECO:0000305" key="12">
    <source>
    </source>
</evidence>
<evidence type="ECO:0000305" key="13">
    <source>
    </source>
</evidence>
<evidence type="ECO:0000312" key="14">
    <source>
        <dbReference type="EMBL" id="AAV53699.1"/>
    </source>
</evidence>
<evidence type="ECO:0007744" key="15">
    <source>
        <dbReference type="PDB" id="3GB4"/>
    </source>
</evidence>
<evidence type="ECO:0007744" key="16">
    <source>
        <dbReference type="PDB" id="3GKE"/>
    </source>
</evidence>
<evidence type="ECO:0007744" key="17">
    <source>
        <dbReference type="PDB" id="3GL0"/>
    </source>
</evidence>
<evidence type="ECO:0007744" key="18">
    <source>
        <dbReference type="PDB" id="3GL2"/>
    </source>
</evidence>
<evidence type="ECO:0007744" key="19">
    <source>
        <dbReference type="PDB" id="3GOB"/>
    </source>
</evidence>
<evidence type="ECO:0007744" key="20">
    <source>
        <dbReference type="PDB" id="3GTE"/>
    </source>
</evidence>
<evidence type="ECO:0007744" key="21">
    <source>
        <dbReference type="PDB" id="3GTS"/>
    </source>
</evidence>
<evidence type="ECO:0007829" key="22">
    <source>
        <dbReference type="PDB" id="3GKE"/>
    </source>
</evidence>
<evidence type="ECO:0007829" key="23">
    <source>
        <dbReference type="PDB" id="3GL0"/>
    </source>
</evidence>
<comment type="function">
    <text evidence="2 3 4 5">Component of the dicamba O-demethylase multicomponent enzyme system involved in the degradation of the herbicide dicamba (PubMed:15820213, PubMed:15855162, PubMed:16535584). In vitro, catalyzes the O-demethylation of 2-methoxy-3,6-dichlorobenzoic acid (dicamba) to yield 3,6-dichlorosalicylic acid (DCSA) via an exocyclic monooxygenation (PubMed:15820213, PubMed:15855162, PubMed:16535584, PubMed:19616009).</text>
</comment>
<comment type="catalytic activity">
    <reaction evidence="2 3 4 13">
        <text>3,6-dichloro-2-methoxybenzoate + 2 reduced [2Fe-2S]-[ferredoxin] + O2 + 2 H(+) = 3,6-dichlorosalicylate + formaldehyde + 2 oxidized [2Fe-2S]-[ferredoxin] + H2O</text>
        <dbReference type="Rhea" id="RHEA:57016"/>
        <dbReference type="Rhea" id="RHEA-COMP:10000"/>
        <dbReference type="Rhea" id="RHEA-COMP:10001"/>
        <dbReference type="ChEBI" id="CHEBI:15377"/>
        <dbReference type="ChEBI" id="CHEBI:15378"/>
        <dbReference type="ChEBI" id="CHEBI:15379"/>
        <dbReference type="ChEBI" id="CHEBI:16842"/>
        <dbReference type="ChEBI" id="CHEBI:33737"/>
        <dbReference type="ChEBI" id="CHEBI:33738"/>
        <dbReference type="ChEBI" id="CHEBI:141349"/>
        <dbReference type="ChEBI" id="CHEBI:141350"/>
    </reaction>
</comment>
<comment type="cofactor">
    <cofactor evidence="2 5 6 12">
        <name>[2Fe-2S] cluster</name>
        <dbReference type="ChEBI" id="CHEBI:190135"/>
    </cofactor>
    <text evidence="5 6">Binds 1 [2Fe-2S] cluster per subunit.</text>
</comment>
<comment type="activity regulation">
    <text evidence="2 4 5">Activity enhanced by Fe(2+) and Mg(2+) ions.</text>
</comment>
<comment type="biophysicochemical properties">
    <kinetics>
        <KM evidence="2">8 uM for dicamba</KM>
        <Vmax evidence="2">150.0 nmol/min/mg enzyme</Vmax>
    </kinetics>
    <phDependence>
        <text evidence="2">Optimum pH is between 6.5-7.5.</text>
    </phDependence>
    <temperatureDependence>
        <text evidence="2">Optimum temperature is 30 degrees Celsius.</text>
    </temperatureDependence>
</comment>
<comment type="subunit">
    <text evidence="2 3 4 5 6">Homotrimer (PubMed:15820213, PubMed:19616009, PubMed:19616011). The dicamba O-demethylase multicomponent enzyme system is composed of an oxygenase component (DdmC) and an electron transfer component formed by a ferredoxin reductase (DdmA) and a ferredoxin (DdmB) (PubMed:15820213, PubMed:15855162, PubMed:16535584). In vitro, dicamba O-demethylase assays in which DdmA2 is substituted for DdmA1 demonstrate that the two enzymes possess nearly identical activities (PubMed:15855162).</text>
</comment>
<accession>Q5S3I3</accession>
<dbReference type="EC" id="1.14.15.-" evidence="2 3 4 13"/>
<dbReference type="EMBL" id="AY786443">
    <property type="protein sequence ID" value="AAV53699.1"/>
    <property type="molecule type" value="Genomic_DNA"/>
</dbReference>
<dbReference type="PDB" id="3GB4">
    <property type="method" value="X-ray"/>
    <property type="resolution" value="2.05 A"/>
    <property type="chains" value="A/B/C=1-339"/>
</dbReference>
<dbReference type="PDB" id="3GKE">
    <property type="method" value="X-ray"/>
    <property type="resolution" value="1.75 A"/>
    <property type="chains" value="A/B/C=2-339"/>
</dbReference>
<dbReference type="PDB" id="3GL0">
    <property type="method" value="X-ray"/>
    <property type="resolution" value="1.75 A"/>
    <property type="chains" value="A/B/C=2-339"/>
</dbReference>
<dbReference type="PDB" id="3GL2">
    <property type="method" value="X-ray"/>
    <property type="resolution" value="2.10 A"/>
    <property type="chains" value="A/B/C=2-339"/>
</dbReference>
<dbReference type="PDB" id="3GOB">
    <property type="method" value="X-ray"/>
    <property type="resolution" value="2.05 A"/>
    <property type="chains" value="A/B/C=1-339"/>
</dbReference>
<dbReference type="PDB" id="3GTE">
    <property type="method" value="X-ray"/>
    <property type="resolution" value="1.95 A"/>
    <property type="chains" value="A/B/C=1-339"/>
</dbReference>
<dbReference type="PDB" id="3GTS">
    <property type="method" value="X-ray"/>
    <property type="resolution" value="2.20 A"/>
    <property type="chains" value="A/B/C=1-339"/>
</dbReference>
<dbReference type="PDB" id="6VSH">
    <property type="method" value="X-ray"/>
    <property type="resolution" value="3.00 A"/>
    <property type="chains" value="A/B/C=2-339"/>
</dbReference>
<dbReference type="PDBsum" id="3GB4"/>
<dbReference type="PDBsum" id="3GKE"/>
<dbReference type="PDBsum" id="3GL0"/>
<dbReference type="PDBsum" id="3GL2"/>
<dbReference type="PDBsum" id="3GOB"/>
<dbReference type="PDBsum" id="3GTE"/>
<dbReference type="PDBsum" id="3GTS"/>
<dbReference type="PDBsum" id="6VSH"/>
<dbReference type="SMR" id="Q5S3I3"/>
<dbReference type="EvolutionaryTrace" id="Q5S3I3"/>
<dbReference type="GO" id="GO:0051537">
    <property type="term" value="F:2 iron, 2 sulfur cluster binding"/>
    <property type="evidence" value="ECO:0007669"/>
    <property type="project" value="UniProtKB-KW"/>
</dbReference>
<dbReference type="GO" id="GO:0046872">
    <property type="term" value="F:metal ion binding"/>
    <property type="evidence" value="ECO:0007669"/>
    <property type="project" value="UniProtKB-KW"/>
</dbReference>
<dbReference type="GO" id="GO:0004497">
    <property type="term" value="F:monooxygenase activity"/>
    <property type="evidence" value="ECO:0007669"/>
    <property type="project" value="UniProtKB-KW"/>
</dbReference>
<dbReference type="GO" id="GO:0009056">
    <property type="term" value="P:catabolic process"/>
    <property type="evidence" value="ECO:0007669"/>
    <property type="project" value="UniProtKB-KW"/>
</dbReference>
<dbReference type="CDD" id="cd08878">
    <property type="entry name" value="RHO_alpha_C_DMO-like"/>
    <property type="match status" value="1"/>
</dbReference>
<dbReference type="CDD" id="cd03532">
    <property type="entry name" value="Rieske_RO_Alpha_VanA_DdmC"/>
    <property type="match status" value="1"/>
</dbReference>
<dbReference type="Gene3D" id="3.90.380.10">
    <property type="entry name" value="Naphthalene 1,2-dioxygenase Alpha Subunit, Chain A, domain 1"/>
    <property type="match status" value="1"/>
</dbReference>
<dbReference type="Gene3D" id="2.102.10.10">
    <property type="entry name" value="Rieske [2Fe-2S] iron-sulphur domain"/>
    <property type="match status" value="1"/>
</dbReference>
<dbReference type="InterPro" id="IPR050584">
    <property type="entry name" value="Cholesterol_7-desaturase"/>
</dbReference>
<dbReference type="InterPro" id="IPR017941">
    <property type="entry name" value="Rieske_2Fe-2S"/>
</dbReference>
<dbReference type="InterPro" id="IPR036922">
    <property type="entry name" value="Rieske_2Fe-2S_sf"/>
</dbReference>
<dbReference type="InterPro" id="IPR044043">
    <property type="entry name" value="VanA_C_cat"/>
</dbReference>
<dbReference type="PANTHER" id="PTHR21266:SF60">
    <property type="entry name" value="3-KETOSTEROID-9-ALPHA-MONOOXYGENASE, OXYGENASE COMPONENT"/>
    <property type="match status" value="1"/>
</dbReference>
<dbReference type="PANTHER" id="PTHR21266">
    <property type="entry name" value="IRON-SULFUR DOMAIN CONTAINING PROTEIN"/>
    <property type="match status" value="1"/>
</dbReference>
<dbReference type="Pfam" id="PF00355">
    <property type="entry name" value="Rieske"/>
    <property type="match status" value="1"/>
</dbReference>
<dbReference type="Pfam" id="PF19112">
    <property type="entry name" value="VanA_C"/>
    <property type="match status" value="1"/>
</dbReference>
<dbReference type="SUPFAM" id="SSF55961">
    <property type="entry name" value="Bet v1-like"/>
    <property type="match status" value="1"/>
</dbReference>
<dbReference type="SUPFAM" id="SSF50022">
    <property type="entry name" value="ISP domain"/>
    <property type="match status" value="1"/>
</dbReference>
<dbReference type="PROSITE" id="PS51296">
    <property type="entry name" value="RIESKE"/>
    <property type="match status" value="1"/>
</dbReference>